<keyword id="KW-0134">Cell wall</keyword>
<keyword id="KW-1015">Disulfide bond</keyword>
<keyword id="KW-0274">FAD</keyword>
<keyword id="KW-0285">Flavoprotein</keyword>
<keyword id="KW-0325">Glycoprotein</keyword>
<keyword id="KW-0547">Nucleotide-binding</keyword>
<keyword id="KW-0560">Oxidoreductase</keyword>
<keyword id="KW-1185">Reference proteome</keyword>
<keyword id="KW-0964">Secreted</keyword>
<keyword id="KW-0732">Signal</keyword>
<accession>Q9FZC5</accession>
<accession>Q949N1</accession>
<sequence length="530" mass="58948">MKGTLSVLCLVLLVSVLEAAVTKPKFGDFIGCLRYRTSPENPITDAISFADNTTTFLSSYVSYTKNKRFSTPNYRKLLAIVAAKHVSHVQATVVCAKSNGIQLRIRSGGHDYEGLSYMSSVPFVILDMYNLRSITVDVSSKKAWIQAGATLGELYTNVNDVSQTLAFPAGVCATVGAGGHISGGGYGNLMRKYGITVDHVIDAQIIDVNGKLLNRATMGEDLFWAIRGGGGGSFGVILSWKINLVDVPKIVTVFKVNKTLEQGGTDVLYKWQLVASKFPESLFVRAMPQVANGTKRGERTITVVFYAQFLGRTDALMAIMNQNWPELGLKHEDCQEMSWLNSTLFWADYPAGTPTSILLDRPSSPGDFFKSKSDYVKKPIPKEGLEKLWKTMLKFNNNIVWMQFNPYGGVMDRIPATATAFPHRKGNLFKIQYFTTWFNANATMSSLSQMKELYEVAEPYVSSNPREAFFNYRDIDVGSNPSGETNVDEAKIYGSKYFLGNLKRLMDVKAKYDPDNFFKNEQSIPPVRVM</sequence>
<protein>
    <recommendedName>
        <fullName evidence="7">Berberine bridge enzyme-like 4</fullName>
        <shortName evidence="7">AtBBE-like 4</shortName>
        <ecNumber evidence="1">1.1.1.-</ecNumber>
    </recommendedName>
    <alternativeName>
        <fullName evidence="8">Flavin-dependent oxidoreductase FOX2</fullName>
        <ecNumber evidence="9">1.-.-.-</ecNumber>
    </alternativeName>
</protein>
<dbReference type="EC" id="1.1.1.-" evidence="1"/>
<dbReference type="EC" id="1.-.-.-" evidence="9"/>
<dbReference type="EMBL" id="AC013427">
    <property type="protein sequence ID" value="AAF98577.1"/>
    <property type="molecule type" value="Genomic_DNA"/>
</dbReference>
<dbReference type="EMBL" id="CP002684">
    <property type="protein sequence ID" value="AEE30685.1"/>
    <property type="molecule type" value="Genomic_DNA"/>
</dbReference>
<dbReference type="EMBL" id="AY051000">
    <property type="protein sequence ID" value="AAK93677.1"/>
    <property type="molecule type" value="mRNA"/>
</dbReference>
<dbReference type="EMBL" id="BT015919">
    <property type="protein sequence ID" value="AAU95455.1"/>
    <property type="molecule type" value="mRNA"/>
</dbReference>
<dbReference type="PIR" id="F86390">
    <property type="entry name" value="F86390"/>
</dbReference>
<dbReference type="RefSeq" id="NP_564245.1">
    <property type="nucleotide sequence ID" value="NM_102403.3"/>
</dbReference>
<dbReference type="SMR" id="Q9FZC5"/>
<dbReference type="FunCoup" id="Q9FZC5">
    <property type="interactions" value="2"/>
</dbReference>
<dbReference type="STRING" id="3702.Q9FZC5"/>
<dbReference type="GlyCosmos" id="Q9FZC5">
    <property type="glycosylation" value="5 sites, No reported glycans"/>
</dbReference>
<dbReference type="GlyGen" id="Q9FZC5">
    <property type="glycosylation" value="5 sites"/>
</dbReference>
<dbReference type="iPTMnet" id="Q9FZC5"/>
<dbReference type="PaxDb" id="3702-AT1G26390.1"/>
<dbReference type="ProteomicsDB" id="230526"/>
<dbReference type="EnsemblPlants" id="AT1G26390.1">
    <property type="protein sequence ID" value="AT1G26390.1"/>
    <property type="gene ID" value="AT1G26390"/>
</dbReference>
<dbReference type="GeneID" id="839181"/>
<dbReference type="Gramene" id="AT1G26390.1">
    <property type="protein sequence ID" value="AT1G26390.1"/>
    <property type="gene ID" value="AT1G26390"/>
</dbReference>
<dbReference type="KEGG" id="ath:AT1G26390"/>
<dbReference type="Araport" id="AT1G26390"/>
<dbReference type="TAIR" id="AT1G26390">
    <property type="gene designation" value="ATBBE4"/>
</dbReference>
<dbReference type="eggNOG" id="ENOG502QVGN">
    <property type="taxonomic scope" value="Eukaryota"/>
</dbReference>
<dbReference type="HOGENOM" id="CLU_018354_6_0_1"/>
<dbReference type="InParanoid" id="Q9FZC5"/>
<dbReference type="OMA" id="IFIRAMP"/>
<dbReference type="PhylomeDB" id="Q9FZC5"/>
<dbReference type="BioCyc" id="ARA:AT1G26390-MONOMER"/>
<dbReference type="PRO" id="PR:Q9FZC5"/>
<dbReference type="Proteomes" id="UP000006548">
    <property type="component" value="Chromosome 1"/>
</dbReference>
<dbReference type="ExpressionAtlas" id="Q9FZC5">
    <property type="expression patterns" value="baseline and differential"/>
</dbReference>
<dbReference type="GO" id="GO:0005576">
    <property type="term" value="C:extracellular region"/>
    <property type="evidence" value="ECO:0007669"/>
    <property type="project" value="UniProtKB-KW"/>
</dbReference>
<dbReference type="GO" id="GO:0009505">
    <property type="term" value="C:plant-type cell wall"/>
    <property type="evidence" value="ECO:0000250"/>
    <property type="project" value="UniProtKB"/>
</dbReference>
<dbReference type="GO" id="GO:0071949">
    <property type="term" value="F:FAD binding"/>
    <property type="evidence" value="ECO:0007669"/>
    <property type="project" value="InterPro"/>
</dbReference>
<dbReference type="GO" id="GO:0016491">
    <property type="term" value="F:oxidoreductase activity"/>
    <property type="evidence" value="ECO:0007669"/>
    <property type="project" value="UniProtKB-KW"/>
</dbReference>
<dbReference type="FunFam" id="3.30.43.10:FF:000004">
    <property type="entry name" value="Berberine bridge enzyme-like 15"/>
    <property type="match status" value="1"/>
</dbReference>
<dbReference type="Gene3D" id="3.30.465.10">
    <property type="match status" value="1"/>
</dbReference>
<dbReference type="Gene3D" id="3.40.462.20">
    <property type="match status" value="1"/>
</dbReference>
<dbReference type="Gene3D" id="3.30.43.10">
    <property type="entry name" value="Uridine Diphospho-n-acetylenolpyruvylglucosamine Reductase, domain 2"/>
    <property type="match status" value="1"/>
</dbReference>
<dbReference type="InterPro" id="IPR012951">
    <property type="entry name" value="BBE"/>
</dbReference>
<dbReference type="InterPro" id="IPR016166">
    <property type="entry name" value="FAD-bd_PCMH"/>
</dbReference>
<dbReference type="InterPro" id="IPR036318">
    <property type="entry name" value="FAD-bd_PCMH-like_sf"/>
</dbReference>
<dbReference type="InterPro" id="IPR016167">
    <property type="entry name" value="FAD-bd_PCMH_sub1"/>
</dbReference>
<dbReference type="InterPro" id="IPR016169">
    <property type="entry name" value="FAD-bd_PCMH_sub2"/>
</dbReference>
<dbReference type="InterPro" id="IPR006094">
    <property type="entry name" value="Oxid_FAD_bind_N"/>
</dbReference>
<dbReference type="PANTHER" id="PTHR32448">
    <property type="entry name" value="OS08G0158400 PROTEIN"/>
    <property type="match status" value="1"/>
</dbReference>
<dbReference type="Pfam" id="PF08031">
    <property type="entry name" value="BBE"/>
    <property type="match status" value="1"/>
</dbReference>
<dbReference type="Pfam" id="PF01565">
    <property type="entry name" value="FAD_binding_4"/>
    <property type="match status" value="1"/>
</dbReference>
<dbReference type="SUPFAM" id="SSF56176">
    <property type="entry name" value="FAD-binding/transporter-associated domain-like"/>
    <property type="match status" value="1"/>
</dbReference>
<dbReference type="PROSITE" id="PS51387">
    <property type="entry name" value="FAD_PCMH"/>
    <property type="match status" value="1"/>
</dbReference>
<reference key="1">
    <citation type="journal article" date="2000" name="Nature">
        <title>Sequence and analysis of chromosome 1 of the plant Arabidopsis thaliana.</title>
        <authorList>
            <person name="Theologis A."/>
            <person name="Ecker J.R."/>
            <person name="Palm C.J."/>
            <person name="Federspiel N.A."/>
            <person name="Kaul S."/>
            <person name="White O."/>
            <person name="Alonso J."/>
            <person name="Altafi H."/>
            <person name="Araujo R."/>
            <person name="Bowman C.L."/>
            <person name="Brooks S.Y."/>
            <person name="Buehler E."/>
            <person name="Chan A."/>
            <person name="Chao Q."/>
            <person name="Chen H."/>
            <person name="Cheuk R.F."/>
            <person name="Chin C.W."/>
            <person name="Chung M.K."/>
            <person name="Conn L."/>
            <person name="Conway A.B."/>
            <person name="Conway A.R."/>
            <person name="Creasy T.H."/>
            <person name="Dewar K."/>
            <person name="Dunn P."/>
            <person name="Etgu P."/>
            <person name="Feldblyum T.V."/>
            <person name="Feng J.-D."/>
            <person name="Fong B."/>
            <person name="Fujii C.Y."/>
            <person name="Gill J.E."/>
            <person name="Goldsmith A.D."/>
            <person name="Haas B."/>
            <person name="Hansen N.F."/>
            <person name="Hughes B."/>
            <person name="Huizar L."/>
            <person name="Hunter J.L."/>
            <person name="Jenkins J."/>
            <person name="Johnson-Hopson C."/>
            <person name="Khan S."/>
            <person name="Khaykin E."/>
            <person name="Kim C.J."/>
            <person name="Koo H.L."/>
            <person name="Kremenetskaia I."/>
            <person name="Kurtz D.B."/>
            <person name="Kwan A."/>
            <person name="Lam B."/>
            <person name="Langin-Hooper S."/>
            <person name="Lee A."/>
            <person name="Lee J.M."/>
            <person name="Lenz C.A."/>
            <person name="Li J.H."/>
            <person name="Li Y.-P."/>
            <person name="Lin X."/>
            <person name="Liu S.X."/>
            <person name="Liu Z.A."/>
            <person name="Luros J.S."/>
            <person name="Maiti R."/>
            <person name="Marziali A."/>
            <person name="Militscher J."/>
            <person name="Miranda M."/>
            <person name="Nguyen M."/>
            <person name="Nierman W.C."/>
            <person name="Osborne B.I."/>
            <person name="Pai G."/>
            <person name="Peterson J."/>
            <person name="Pham P.K."/>
            <person name="Rizzo M."/>
            <person name="Rooney T."/>
            <person name="Rowley D."/>
            <person name="Sakano H."/>
            <person name="Salzberg S.L."/>
            <person name="Schwartz J.R."/>
            <person name="Shinn P."/>
            <person name="Southwick A.M."/>
            <person name="Sun H."/>
            <person name="Tallon L.J."/>
            <person name="Tambunga G."/>
            <person name="Toriumi M.J."/>
            <person name="Town C.D."/>
            <person name="Utterback T."/>
            <person name="Van Aken S."/>
            <person name="Vaysberg M."/>
            <person name="Vysotskaia V.S."/>
            <person name="Walker M."/>
            <person name="Wu D."/>
            <person name="Yu G."/>
            <person name="Fraser C.M."/>
            <person name="Venter J.C."/>
            <person name="Davis R.W."/>
        </authorList>
    </citation>
    <scope>NUCLEOTIDE SEQUENCE [LARGE SCALE GENOMIC DNA]</scope>
    <source>
        <strain>cv. Columbia</strain>
    </source>
</reference>
<reference key="2">
    <citation type="journal article" date="2017" name="Plant J.">
        <title>Araport11: a complete reannotation of the Arabidopsis thaliana reference genome.</title>
        <authorList>
            <person name="Cheng C.Y."/>
            <person name="Krishnakumar V."/>
            <person name="Chan A.P."/>
            <person name="Thibaud-Nissen F."/>
            <person name="Schobel S."/>
            <person name="Town C.D."/>
        </authorList>
    </citation>
    <scope>GENOME REANNOTATION</scope>
    <source>
        <strain>cv. Columbia</strain>
    </source>
</reference>
<reference key="3">
    <citation type="journal article" date="2003" name="Science">
        <title>Empirical analysis of transcriptional activity in the Arabidopsis genome.</title>
        <authorList>
            <person name="Yamada K."/>
            <person name="Lim J."/>
            <person name="Dale J.M."/>
            <person name="Chen H."/>
            <person name="Shinn P."/>
            <person name="Palm C.J."/>
            <person name="Southwick A.M."/>
            <person name="Wu H.C."/>
            <person name="Kim C.J."/>
            <person name="Nguyen M."/>
            <person name="Pham P.K."/>
            <person name="Cheuk R.F."/>
            <person name="Karlin-Newmann G."/>
            <person name="Liu S.X."/>
            <person name="Lam B."/>
            <person name="Sakano H."/>
            <person name="Wu T."/>
            <person name="Yu G."/>
            <person name="Miranda M."/>
            <person name="Quach H.L."/>
            <person name="Tripp M."/>
            <person name="Chang C.H."/>
            <person name="Lee J.M."/>
            <person name="Toriumi M.J."/>
            <person name="Chan M.M."/>
            <person name="Tang C.C."/>
            <person name="Onodera C.S."/>
            <person name="Deng J.M."/>
            <person name="Akiyama K."/>
            <person name="Ansari Y."/>
            <person name="Arakawa T."/>
            <person name="Banh J."/>
            <person name="Banno F."/>
            <person name="Bowser L."/>
            <person name="Brooks S.Y."/>
            <person name="Carninci P."/>
            <person name="Chao Q."/>
            <person name="Choy N."/>
            <person name="Enju A."/>
            <person name="Goldsmith A.D."/>
            <person name="Gurjal M."/>
            <person name="Hansen N.F."/>
            <person name="Hayashizaki Y."/>
            <person name="Johnson-Hopson C."/>
            <person name="Hsuan V.W."/>
            <person name="Iida K."/>
            <person name="Karnes M."/>
            <person name="Khan S."/>
            <person name="Koesema E."/>
            <person name="Ishida J."/>
            <person name="Jiang P.X."/>
            <person name="Jones T."/>
            <person name="Kawai J."/>
            <person name="Kamiya A."/>
            <person name="Meyers C."/>
            <person name="Nakajima M."/>
            <person name="Narusaka M."/>
            <person name="Seki M."/>
            <person name="Sakurai T."/>
            <person name="Satou M."/>
            <person name="Tamse R."/>
            <person name="Vaysberg M."/>
            <person name="Wallender E.K."/>
            <person name="Wong C."/>
            <person name="Yamamura Y."/>
            <person name="Yuan S."/>
            <person name="Shinozaki K."/>
            <person name="Davis R.W."/>
            <person name="Theologis A."/>
            <person name="Ecker J.R."/>
        </authorList>
    </citation>
    <scope>NUCLEOTIDE SEQUENCE [LARGE SCALE MRNA]</scope>
    <source>
        <strain>cv. Columbia</strain>
    </source>
</reference>
<reference key="4">
    <citation type="submission" date="2004-10" db="EMBL/GenBank/DDBJ databases">
        <title>Arabidopsis ORF clones.</title>
        <authorList>
            <person name="Cheuk R."/>
            <person name="Chen H."/>
            <person name="Kim C.J."/>
            <person name="Shinn P."/>
            <person name="Ecker J.R."/>
        </authorList>
    </citation>
    <scope>NUCLEOTIDE SEQUENCE [MRNA]</scope>
    <source>
        <strain>cv. Columbia</strain>
    </source>
</reference>
<reference key="5">
    <citation type="journal article" date="2015" name="Nature">
        <title>A new cyanogenic metabolite in Arabidopsis required for inducible pathogen defence.</title>
        <authorList>
            <person name="Rajniak J."/>
            <person name="Barco B."/>
            <person name="Clay N.K."/>
            <person name="Sattely E.S."/>
        </authorList>
    </citation>
    <scope>DISRUPTION PHENOTYPE</scope>
</reference>
<reference key="6">
    <citation type="journal article" date="2015" name="J. Biol. Chem.">
        <title>Oxidation of monolignols by members of the berberine bridge enzyme family suggests a role in plant cell wall metabolism.</title>
        <authorList>
            <person name="Daniel B."/>
            <person name="Pavkov-Keller T."/>
            <person name="Steiner B."/>
            <person name="Dordic A."/>
            <person name="Gutmann A."/>
            <person name="Nidetzky B."/>
            <person name="Sensen C.W."/>
            <person name="van der Graaff E."/>
            <person name="Wallner S."/>
            <person name="Gruber K."/>
            <person name="Macheroux P."/>
        </authorList>
    </citation>
    <scope>GENE FAMILY</scope>
    <scope>NOMENCLATURE</scope>
</reference>
<gene>
    <name evidence="8" type="primary">FOX2</name>
    <name evidence="10" type="ordered locus">At1g26390</name>
    <name evidence="11" type="ORF">T1K7.23</name>
</gene>
<proteinExistence type="evidence at transcript level"/>
<name>FOX2_ARATH</name>
<feature type="signal peptide" evidence="3">
    <location>
        <begin position="1"/>
        <end position="19"/>
    </location>
</feature>
<feature type="chain" id="PRO_5004325706" description="Berberine bridge enzyme-like 4">
    <location>
        <begin position="20"/>
        <end position="530"/>
    </location>
</feature>
<feature type="domain" description="FAD-binding PCMH-type" evidence="5">
    <location>
        <begin position="73"/>
        <end position="247"/>
    </location>
</feature>
<feature type="glycosylation site" description="N-linked (GlcNAc...) asparagine" evidence="4">
    <location>
        <position position="52"/>
    </location>
</feature>
<feature type="glycosylation site" description="N-linked (GlcNAc...) asparagine" evidence="4">
    <location>
        <position position="257"/>
    </location>
</feature>
<feature type="glycosylation site" description="N-linked (GlcNAc...) asparagine" evidence="4">
    <location>
        <position position="292"/>
    </location>
</feature>
<feature type="glycosylation site" description="N-linked (GlcNAc...) asparagine" evidence="4">
    <location>
        <position position="341"/>
    </location>
</feature>
<feature type="glycosylation site" description="N-linked (GlcNAc...) asparagine" evidence="4">
    <location>
        <position position="441"/>
    </location>
</feature>
<feature type="disulfide bond" evidence="2">
    <location>
        <begin position="32"/>
        <end position="95"/>
    </location>
</feature>
<feature type="cross-link" description="6-(S-cysteinyl)-8alpha-(pros-histidyl)-FAD (His-Cys)" evidence="1">
    <location>
        <begin position="110"/>
        <end position="172"/>
    </location>
</feature>
<feature type="sequence conflict" description="In Ref. 3; AAK93677." evidence="9" ref="3">
    <original>E</original>
    <variation>K</variation>
    <location>
        <position position="40"/>
    </location>
</feature>
<evidence type="ECO:0000250" key="1">
    <source>
        <dbReference type="UniProtKB" id="O64743"/>
    </source>
</evidence>
<evidence type="ECO:0000250" key="2">
    <source>
        <dbReference type="UniProtKB" id="P30986"/>
    </source>
</evidence>
<evidence type="ECO:0000255" key="3"/>
<evidence type="ECO:0000255" key="4">
    <source>
        <dbReference type="PROSITE-ProRule" id="PRU00498"/>
    </source>
</evidence>
<evidence type="ECO:0000255" key="5">
    <source>
        <dbReference type="PROSITE-ProRule" id="PRU00718"/>
    </source>
</evidence>
<evidence type="ECO:0000269" key="6">
    <source>
    </source>
</evidence>
<evidence type="ECO:0000303" key="7">
    <source>
    </source>
</evidence>
<evidence type="ECO:0000303" key="8">
    <source>
    </source>
</evidence>
<evidence type="ECO:0000305" key="9"/>
<evidence type="ECO:0000312" key="10">
    <source>
        <dbReference type="Araport" id="AT1G26390"/>
    </source>
</evidence>
<evidence type="ECO:0000312" key="11">
    <source>
        <dbReference type="EMBL" id="AAF98577.1"/>
    </source>
</evidence>
<organism>
    <name type="scientific">Arabidopsis thaliana</name>
    <name type="common">Mouse-ear cress</name>
    <dbReference type="NCBI Taxonomy" id="3702"/>
    <lineage>
        <taxon>Eukaryota</taxon>
        <taxon>Viridiplantae</taxon>
        <taxon>Streptophyta</taxon>
        <taxon>Embryophyta</taxon>
        <taxon>Tracheophyta</taxon>
        <taxon>Spermatophyta</taxon>
        <taxon>Magnoliopsida</taxon>
        <taxon>eudicotyledons</taxon>
        <taxon>Gunneridae</taxon>
        <taxon>Pentapetalae</taxon>
        <taxon>rosids</taxon>
        <taxon>malvids</taxon>
        <taxon>Brassicales</taxon>
        <taxon>Brassicaceae</taxon>
        <taxon>Camelineae</taxon>
        <taxon>Arabidopsis</taxon>
    </lineage>
</organism>
<comment type="function">
    <text evidence="9">Probable flavin-dependent oxidoreductase.</text>
</comment>
<comment type="cofactor">
    <cofactor evidence="1">
        <name>FAD</name>
        <dbReference type="ChEBI" id="CHEBI:57692"/>
    </cofactor>
    <text evidence="1">Binds 1 FAD per subunit in a bicovalent manner.</text>
</comment>
<comment type="subcellular location">
    <subcellularLocation>
        <location evidence="1">Secreted</location>
        <location evidence="1">Cell wall</location>
    </subcellularLocation>
</comment>
<comment type="PTM">
    <text evidence="1">The FAD cofactor is bound via a bicovalent 6-S-cysteinyl, 8alpha-N1-histidyl FAD linkage.</text>
</comment>
<comment type="disruption phenotype">
    <text evidence="6">No effect on the levels of ICN metabolites.</text>
</comment>
<comment type="similarity">
    <text evidence="9">Belongs to the oxygen-dependent FAD-linked oxidoreductase family.</text>
</comment>